<comment type="function">
    <text evidence="1">May play a role in the division of some cell types.</text>
</comment>
<comment type="catalytic activity">
    <reaction>
        <text>L-seryl-[protein] + ATP = O-phospho-L-seryl-[protein] + ADP + H(+)</text>
        <dbReference type="Rhea" id="RHEA:17989"/>
        <dbReference type="Rhea" id="RHEA-COMP:9863"/>
        <dbReference type="Rhea" id="RHEA-COMP:11604"/>
        <dbReference type="ChEBI" id="CHEBI:15378"/>
        <dbReference type="ChEBI" id="CHEBI:29999"/>
        <dbReference type="ChEBI" id="CHEBI:30616"/>
        <dbReference type="ChEBI" id="CHEBI:83421"/>
        <dbReference type="ChEBI" id="CHEBI:456216"/>
        <dbReference type="EC" id="2.7.11.21"/>
    </reaction>
</comment>
<comment type="catalytic activity">
    <reaction>
        <text>L-threonyl-[protein] + ATP = O-phospho-L-threonyl-[protein] + ADP + H(+)</text>
        <dbReference type="Rhea" id="RHEA:46608"/>
        <dbReference type="Rhea" id="RHEA-COMP:11060"/>
        <dbReference type="Rhea" id="RHEA-COMP:11605"/>
        <dbReference type="ChEBI" id="CHEBI:15378"/>
        <dbReference type="ChEBI" id="CHEBI:30013"/>
        <dbReference type="ChEBI" id="CHEBI:30616"/>
        <dbReference type="ChEBI" id="CHEBI:61977"/>
        <dbReference type="ChEBI" id="CHEBI:456216"/>
        <dbReference type="EC" id="2.7.11.21"/>
    </reaction>
</comment>
<comment type="tissue specificity">
    <text evidence="6">Embryo.</text>
</comment>
<comment type="similarity">
    <text evidence="3">Belongs to the protein kinase superfamily. Ser/Thr protein kinase family. CDC5/Polo subfamily.</text>
</comment>
<dbReference type="EC" id="2.7.11.21"/>
<dbReference type="EMBL" id="AX040998">
    <property type="protein sequence ID" value="CAC17052.1"/>
    <property type="molecule type" value="mRNA"/>
</dbReference>
<dbReference type="SMR" id="P0C8M8"/>
<dbReference type="STRING" id="4577.P0C8M8"/>
<dbReference type="iPTMnet" id="P0C8M8"/>
<dbReference type="InParanoid" id="P0C8M8"/>
<dbReference type="Proteomes" id="UP000007305">
    <property type="component" value="Unplaced"/>
</dbReference>
<dbReference type="ExpressionAtlas" id="P0C8M8">
    <property type="expression patterns" value="baseline and differential"/>
</dbReference>
<dbReference type="GO" id="GO:0005634">
    <property type="term" value="C:nucleus"/>
    <property type="evidence" value="ECO:0000318"/>
    <property type="project" value="GO_Central"/>
</dbReference>
<dbReference type="GO" id="GO:0005524">
    <property type="term" value="F:ATP binding"/>
    <property type="evidence" value="ECO:0007669"/>
    <property type="project" value="UniProtKB-KW"/>
</dbReference>
<dbReference type="GO" id="GO:0106310">
    <property type="term" value="F:protein serine kinase activity"/>
    <property type="evidence" value="ECO:0007669"/>
    <property type="project" value="RHEA"/>
</dbReference>
<dbReference type="GO" id="GO:0004674">
    <property type="term" value="F:protein serine/threonine kinase activity"/>
    <property type="evidence" value="ECO:0007669"/>
    <property type="project" value="UniProtKB-KW"/>
</dbReference>
<dbReference type="CDD" id="cd13118">
    <property type="entry name" value="POLO_box_1"/>
    <property type="match status" value="1"/>
</dbReference>
<dbReference type="CDD" id="cd13117">
    <property type="entry name" value="POLO_box_2"/>
    <property type="match status" value="1"/>
</dbReference>
<dbReference type="CDD" id="cd14099">
    <property type="entry name" value="STKc_PLK"/>
    <property type="match status" value="1"/>
</dbReference>
<dbReference type="FunFam" id="1.10.510.10:FF:001048">
    <property type="entry name" value="Serine/threonine-protein kinase PLK"/>
    <property type="match status" value="1"/>
</dbReference>
<dbReference type="FunFam" id="3.30.200.20:FF:000091">
    <property type="entry name" value="Serine/threonine-protein kinase PLK"/>
    <property type="match status" value="1"/>
</dbReference>
<dbReference type="Gene3D" id="3.30.200.20">
    <property type="entry name" value="Phosphorylase Kinase, domain 1"/>
    <property type="match status" value="1"/>
</dbReference>
<dbReference type="Gene3D" id="3.30.1120.30">
    <property type="entry name" value="POLO box domain"/>
    <property type="match status" value="2"/>
</dbReference>
<dbReference type="Gene3D" id="1.10.510.10">
    <property type="entry name" value="Transferase(Phosphotransferase) domain 1"/>
    <property type="match status" value="1"/>
</dbReference>
<dbReference type="InterPro" id="IPR011009">
    <property type="entry name" value="Kinase-like_dom_sf"/>
</dbReference>
<dbReference type="InterPro" id="IPR033701">
    <property type="entry name" value="POLO_box_1"/>
</dbReference>
<dbReference type="InterPro" id="IPR033695">
    <property type="entry name" value="POLO_box_2"/>
</dbReference>
<dbReference type="InterPro" id="IPR000959">
    <property type="entry name" value="POLO_box_dom"/>
</dbReference>
<dbReference type="InterPro" id="IPR036947">
    <property type="entry name" value="POLO_box_dom_sf"/>
</dbReference>
<dbReference type="InterPro" id="IPR000719">
    <property type="entry name" value="Prot_kinase_dom"/>
</dbReference>
<dbReference type="InterPro" id="IPR017441">
    <property type="entry name" value="Protein_kinase_ATP_BS"/>
</dbReference>
<dbReference type="InterPro" id="IPR008271">
    <property type="entry name" value="Ser/Thr_kinase_AS"/>
</dbReference>
<dbReference type="PANTHER" id="PTHR24345:SF0">
    <property type="entry name" value="CELL CYCLE SERINE_THREONINE-PROTEIN KINASE CDC5_MSD2"/>
    <property type="match status" value="1"/>
</dbReference>
<dbReference type="PANTHER" id="PTHR24345">
    <property type="entry name" value="SERINE/THREONINE-PROTEIN KINASE PLK"/>
    <property type="match status" value="1"/>
</dbReference>
<dbReference type="Pfam" id="PF00069">
    <property type="entry name" value="Pkinase"/>
    <property type="match status" value="1"/>
</dbReference>
<dbReference type="Pfam" id="PF00659">
    <property type="entry name" value="POLO_box"/>
    <property type="match status" value="2"/>
</dbReference>
<dbReference type="SMART" id="SM00220">
    <property type="entry name" value="S_TKc"/>
    <property type="match status" value="1"/>
</dbReference>
<dbReference type="SUPFAM" id="SSF82615">
    <property type="entry name" value="Polo-box domain"/>
    <property type="match status" value="2"/>
</dbReference>
<dbReference type="SUPFAM" id="SSF56112">
    <property type="entry name" value="Protein kinase-like (PK-like)"/>
    <property type="match status" value="1"/>
</dbReference>
<dbReference type="PROSITE" id="PS50078">
    <property type="entry name" value="POLO_BOX"/>
    <property type="match status" value="2"/>
</dbReference>
<dbReference type="PROSITE" id="PS00107">
    <property type="entry name" value="PROTEIN_KINASE_ATP"/>
    <property type="match status" value="1"/>
</dbReference>
<dbReference type="PROSITE" id="PS50011">
    <property type="entry name" value="PROTEIN_KINASE_DOM"/>
    <property type="match status" value="1"/>
</dbReference>
<dbReference type="PROSITE" id="PS00108">
    <property type="entry name" value="PROTEIN_KINASE_ST"/>
    <property type="match status" value="1"/>
</dbReference>
<evidence type="ECO:0000250" key="1"/>
<evidence type="ECO:0000255" key="2">
    <source>
        <dbReference type="PROSITE-ProRule" id="PRU00154"/>
    </source>
</evidence>
<evidence type="ECO:0000255" key="3">
    <source>
        <dbReference type="PROSITE-ProRule" id="PRU00159"/>
    </source>
</evidence>
<evidence type="ECO:0000255" key="4">
    <source>
        <dbReference type="PROSITE-ProRule" id="PRU10027"/>
    </source>
</evidence>
<evidence type="ECO:0000256" key="5">
    <source>
        <dbReference type="SAM" id="MobiDB-lite"/>
    </source>
</evidence>
<evidence type="ECO:0000269" key="6">
    <source>
    </source>
</evidence>
<feature type="chain" id="PRO_0000361269" description="Probable serine/threonine-protein kinase CCRP1">
    <location>
        <begin position="1"/>
        <end position="626"/>
    </location>
</feature>
<feature type="domain" description="Protein kinase" evidence="3">
    <location>
        <begin position="36"/>
        <end position="291"/>
    </location>
</feature>
<feature type="domain" description="POLO box 1" evidence="2">
    <location>
        <begin position="471"/>
        <end position="554"/>
    </location>
</feature>
<feature type="domain" description="POLO box 2" evidence="2">
    <location>
        <begin position="574"/>
        <end position="626"/>
    </location>
</feature>
<feature type="region of interest" description="Disordered" evidence="5">
    <location>
        <begin position="399"/>
        <end position="433"/>
    </location>
</feature>
<feature type="compositionally biased region" description="Polar residues" evidence="5">
    <location>
        <begin position="400"/>
        <end position="427"/>
    </location>
</feature>
<feature type="active site" description="Proton acceptor" evidence="3 4">
    <location>
        <position position="159"/>
    </location>
</feature>
<feature type="binding site" evidence="3">
    <location>
        <begin position="42"/>
        <end position="50"/>
    </location>
    <ligand>
        <name>ATP</name>
        <dbReference type="ChEBI" id="CHEBI:30616"/>
    </ligand>
</feature>
<feature type="binding site" evidence="3">
    <location>
        <position position="65"/>
    </location>
    <ligand>
        <name>ATP</name>
        <dbReference type="ChEBI" id="CHEBI:30616"/>
    </ligand>
</feature>
<feature type="modified residue" description="Phosphoserine" evidence="6">
    <location>
        <position position="71"/>
    </location>
</feature>
<sequence>MDPKATSTSKTDNIDQITIIEEKVNKIGTEPTIRKYSKGRMLGKGGFAKCYEVTNLENKKVLAGKIICKASLTKSRAKQKLISEIKIHKSLRHSNIVEFEHVFEDQENVYILLELCPNQSLHDLIKRRKRLTEIEVQCYTLQLICGLKYLHSRRVIHRDLKLGNLLLNDKMELKICDFGLAAKLEFDGEKRKTVCGTPNYIAPEVIEGKGGHSYEVDTWSLGVIIYTLLVGRPPFETSDVKQTYKRIKACEYSFPDHVSVSDTAKNLVQKMLTLDPSKRPSLDEILQHPFLKNANNIPKFLPASTLACPPSTSYLNQFASPENSVKVPSQPAPKSAEATPLAAQKNGRFINTQGSNMFGSEKTLVTSPHSATTQAHTNENVVLTSQLDRHQTQGEKGWNFTKTGSWQSNLNGTQSVKGSSRPQTVQQKGDLKSAQSLKAPALLNNLGSRLRVSGSAVGSNRGQVLSGNEVWVKKWVDYSSKYGMGYNLSNGTTGVFFNDNTKIVFNQKTDQVTYIQRGKNDRQDTVTHYSLTEYPKDLQKKMTLLQHFKKYLEGSEYGGSESINDGTETQIGVYVKKWVKTKNATLFRLSNKTVQVHFTDRTEIILNSENKQVTYVARKETEPISP</sequence>
<organism>
    <name type="scientific">Zea mays</name>
    <name type="common">Maize</name>
    <dbReference type="NCBI Taxonomy" id="4577"/>
    <lineage>
        <taxon>Eukaryota</taxon>
        <taxon>Viridiplantae</taxon>
        <taxon>Streptophyta</taxon>
        <taxon>Embryophyta</taxon>
        <taxon>Tracheophyta</taxon>
        <taxon>Spermatophyta</taxon>
        <taxon>Magnoliopsida</taxon>
        <taxon>Liliopsida</taxon>
        <taxon>Poales</taxon>
        <taxon>Poaceae</taxon>
        <taxon>PACMAD clade</taxon>
        <taxon>Panicoideae</taxon>
        <taxon>Andropogonodae</taxon>
        <taxon>Andropogoneae</taxon>
        <taxon>Tripsacinae</taxon>
        <taxon>Zea</taxon>
    </lineage>
</organism>
<protein>
    <recommendedName>
        <fullName>Probable serine/threonine-protein kinase CCRP1</fullName>
        <ecNumber>2.7.11.21</ecNumber>
    </recommendedName>
    <alternativeName>
        <fullName>Cell-cycle related Protein 1</fullName>
    </alternativeName>
</protein>
<name>CCR1_MAIZE</name>
<reference key="1">
    <citation type="patent" date="2000-11-02" number="WO0065040">
        <title>Cell cycle genes and methods of use.</title>
        <authorList>
            <person name="Helentjaris T.G."/>
            <person name="Habben J.E."/>
            <person name="Sun Y."/>
        </authorList>
    </citation>
    <scope>NUCLEOTIDE SEQUENCE [MRNA]</scope>
</reference>
<reference key="2">
    <citation type="journal article" date="2008" name="Planta">
        <title>A shotgun phosphoproteomics analysis of embryos in germinated maize seeds.</title>
        <authorList>
            <person name="Lu T.-C."/>
            <person name="Meng L.B."/>
            <person name="Yang C.-P."/>
            <person name="Liu G.-F."/>
            <person name="Liu G.-J."/>
            <person name="Ma W."/>
            <person name="Wang B.-C."/>
        </authorList>
    </citation>
    <scope>PHOSPHORYLATION [LARGE SCALE ANALYSIS] AT SER-71</scope>
    <scope>IDENTIFICATION BY MASS SPECTROMETRY</scope>
    <scope>TISSUE SPECIFICITY</scope>
</reference>
<accession>P0C8M8</accession>
<proteinExistence type="evidence at protein level"/>
<gene>
    <name type="primary">CCRP1</name>
</gene>
<keyword id="KW-0067">ATP-binding</keyword>
<keyword id="KW-0418">Kinase</keyword>
<keyword id="KW-0547">Nucleotide-binding</keyword>
<keyword id="KW-0597">Phosphoprotein</keyword>
<keyword id="KW-1185">Reference proteome</keyword>
<keyword id="KW-0677">Repeat</keyword>
<keyword id="KW-0723">Serine/threonine-protein kinase</keyword>
<keyword id="KW-0808">Transferase</keyword>